<accession>C0HLB0</accession>
<evidence type="ECO:0000250" key="1">
    <source>
        <dbReference type="UniProtKB" id="A0A1Z0YU59"/>
    </source>
</evidence>
<evidence type="ECO:0000255" key="2">
    <source>
        <dbReference type="PROSITE-ProRule" id="PRU00031"/>
    </source>
</evidence>
<evidence type="ECO:0000269" key="3">
    <source>
    </source>
</evidence>
<evidence type="ECO:0000303" key="4">
    <source>
    </source>
</evidence>
<evidence type="ECO:0000305" key="5"/>
<evidence type="ECO:0000305" key="6">
    <source>
    </source>
</evidence>
<protein>
    <recommendedName>
        <fullName evidence="4">Mambaquaretin-9</fullName>
        <shortName evidence="4">MQ9</shortName>
    </recommendedName>
    <alternativeName>
        <fullName evidence="4">Upsilon-Dv2b</fullName>
    </alternativeName>
</protein>
<proteinExistence type="evidence at protein level"/>
<comment type="function">
    <text evidence="1 3">Interacts with vasopressin V2 receptor (V2R/AVPR2), probably in a selective manner (PubMed:35122240). Inhibits vasopressin binding human V2R in the nanomolar range (Ki=45.1 nM), and also potently inhibits vasopressin-induced cAMP production (IC(50)=111 nM) (PubMed:35122240). In vivo, intraperitoneal injection of this protein into rats increases diuresis, without any loss of electrolytes (By similarity).</text>
</comment>
<comment type="subcellular location">
    <subcellularLocation>
        <location evidence="3">Secreted</location>
    </subcellularLocation>
</comment>
<comment type="tissue specificity">
    <text evidence="6">Expressed by the venom gland.</text>
</comment>
<comment type="domain">
    <text evidence="1">Exploits its two major loops and engages more positions in its interaction with V2R. The pharmacophore defined by numerous amino acids positioned in loop 1 (9 to 17) and loop 2 (33, 38 and 43) may be at the origin of the absolute selectivity of this protein for V2R.</text>
</comment>
<comment type="mass spectrometry" mass="6202.85" method="MALDI" evidence="3">
    <text>Monoisotopic mass.</text>
</comment>
<comment type="similarity">
    <text evidence="5">Belongs to the venom Kunitz-type family.</text>
</comment>
<organism>
    <name type="scientific">Dendroaspis viridis</name>
    <name type="common">Western green mamba</name>
    <dbReference type="NCBI Taxonomy" id="8621"/>
    <lineage>
        <taxon>Eukaryota</taxon>
        <taxon>Metazoa</taxon>
        <taxon>Chordata</taxon>
        <taxon>Craniata</taxon>
        <taxon>Vertebrata</taxon>
        <taxon>Euteleostomi</taxon>
        <taxon>Lepidosauria</taxon>
        <taxon>Squamata</taxon>
        <taxon>Bifurcata</taxon>
        <taxon>Unidentata</taxon>
        <taxon>Episquamata</taxon>
        <taxon>Toxicofera</taxon>
        <taxon>Serpentes</taxon>
        <taxon>Colubroidea</taxon>
        <taxon>Elapidae</taxon>
        <taxon>Elapinae</taxon>
        <taxon>Dendroaspis</taxon>
    </lineage>
</organism>
<sequence length="56" mass="6213">RPYACELTVAAGPCLRFSAFYYSKGANQCYPFNYSGCGGNANRFSTNQKCRRTCVV</sequence>
<feature type="chain" id="PRO_0000457572" description="Mambaquaretin-9" evidence="3">
    <location>
        <begin position="1"/>
        <end position="56"/>
    </location>
</feature>
<feature type="domain" description="BPTI/Kunitz inhibitor" evidence="2">
    <location>
        <begin position="5"/>
        <end position="56"/>
    </location>
</feature>
<feature type="disulfide bond" evidence="1">
    <location>
        <begin position="5"/>
        <end position="54"/>
    </location>
</feature>
<feature type="disulfide bond" evidence="1">
    <location>
        <begin position="14"/>
        <end position="37"/>
    </location>
</feature>
<feature type="disulfide bond" evidence="1">
    <location>
        <begin position="29"/>
        <end position="50"/>
    </location>
</feature>
<keyword id="KW-0903">Direct protein sequencing</keyword>
<keyword id="KW-1015">Disulfide bond</keyword>
<keyword id="KW-1213">G-protein coupled receptor impairing toxin</keyword>
<keyword id="KW-0964">Secreted</keyword>
<keyword id="KW-0800">Toxin</keyword>
<reference key="1">
    <citation type="journal article" date="2022" name="Br. J. Pharmacol.">
        <title>A new Kunitz-type snake toxin family associated with an original mode of interaction with the vasopressin 2 receptor.</title>
        <authorList>
            <person name="Droctove L."/>
            <person name="Ciolek J."/>
            <person name="Mendre C."/>
            <person name="Chorfa A."/>
            <person name="Huerta P."/>
            <person name="Carvalho C."/>
            <person name="Gouin C."/>
            <person name="Lancien M."/>
            <person name="Stanajic-Petrovic G."/>
            <person name="Braco L."/>
            <person name="Blanchet G."/>
            <person name="Upert G."/>
            <person name="De Pauw G."/>
            <person name="Barbe P."/>
            <person name="Keck M."/>
            <person name="Mourier G."/>
            <person name="Mouillac B."/>
            <person name="Denis S."/>
            <person name="Rodriguez de la Vega R.C."/>
            <person name="Quinton L."/>
            <person name="Gilles N."/>
        </authorList>
    </citation>
    <scope>PROTEIN SEQUENCE</scope>
    <scope>FUNCTION</scope>
    <scope>SUBCELLULAR LOCATION</scope>
    <scope>MASS SPECTROMETRY</scope>
    <source>
        <tissue>Venom</tissue>
    </source>
</reference>
<dbReference type="SMR" id="C0HLB0"/>
<dbReference type="GO" id="GO:0005615">
    <property type="term" value="C:extracellular space"/>
    <property type="evidence" value="ECO:0007669"/>
    <property type="project" value="TreeGrafter"/>
</dbReference>
<dbReference type="GO" id="GO:0004867">
    <property type="term" value="F:serine-type endopeptidase inhibitor activity"/>
    <property type="evidence" value="ECO:0007669"/>
    <property type="project" value="InterPro"/>
</dbReference>
<dbReference type="GO" id="GO:0090729">
    <property type="term" value="F:toxin activity"/>
    <property type="evidence" value="ECO:0007669"/>
    <property type="project" value="UniProtKB-KW"/>
</dbReference>
<dbReference type="Gene3D" id="4.10.410.10">
    <property type="entry name" value="Pancreatic trypsin inhibitor Kunitz domain"/>
    <property type="match status" value="1"/>
</dbReference>
<dbReference type="InterPro" id="IPR002223">
    <property type="entry name" value="Kunitz_BPTI"/>
</dbReference>
<dbReference type="InterPro" id="IPR036880">
    <property type="entry name" value="Kunitz_BPTI_sf"/>
</dbReference>
<dbReference type="InterPro" id="IPR020901">
    <property type="entry name" value="Prtase_inh_Kunz-CS"/>
</dbReference>
<dbReference type="InterPro" id="IPR050098">
    <property type="entry name" value="TFPI/VKTCI-like"/>
</dbReference>
<dbReference type="PANTHER" id="PTHR10083:SF374">
    <property type="entry name" value="BPTI_KUNITZ INHIBITOR DOMAIN-CONTAINING PROTEIN"/>
    <property type="match status" value="1"/>
</dbReference>
<dbReference type="PANTHER" id="PTHR10083">
    <property type="entry name" value="KUNITZ-TYPE PROTEASE INHIBITOR-RELATED"/>
    <property type="match status" value="1"/>
</dbReference>
<dbReference type="Pfam" id="PF00014">
    <property type="entry name" value="Kunitz_BPTI"/>
    <property type="match status" value="1"/>
</dbReference>
<dbReference type="PRINTS" id="PR00759">
    <property type="entry name" value="BASICPTASE"/>
</dbReference>
<dbReference type="SMART" id="SM00131">
    <property type="entry name" value="KU"/>
    <property type="match status" value="1"/>
</dbReference>
<dbReference type="SUPFAM" id="SSF57362">
    <property type="entry name" value="BPTI-like"/>
    <property type="match status" value="1"/>
</dbReference>
<dbReference type="PROSITE" id="PS00280">
    <property type="entry name" value="BPTI_KUNITZ_1"/>
    <property type="match status" value="1"/>
</dbReference>
<dbReference type="PROSITE" id="PS50279">
    <property type="entry name" value="BPTI_KUNITZ_2"/>
    <property type="match status" value="1"/>
</dbReference>
<name>MAMB9_DENVI</name>